<comment type="function">
    <text>Binds human IGF1 and IGF2 and bovine insulin.</text>
</comment>
<comment type="tissue specificity">
    <text>Shell.</text>
</comment>
<comment type="mass spectrometry" mass="9325.8" method="Electrospray" evidence="2"/>
<sequence length="84" mass="9338">LSCASCENAACPAIGLPCKPSEYVYTPCGCCPQCPLELGQPCGSFTQRCQFDLWCLRRKGNKIEAYKYVPWHLDFKGVCARVDV</sequence>
<accession>P82595</accession>
<name>PLS_HALLA</name>
<keyword id="KW-0903">Direct protein sequencing</keyword>
<keyword id="KW-1015">Disulfide bond</keyword>
<keyword id="KW-0340">Growth factor binding</keyword>
<organism>
    <name type="scientific">Haliotis laevigata</name>
    <name type="common">Smooth Australian abalone</name>
    <dbReference type="NCBI Taxonomy" id="36097"/>
    <lineage>
        <taxon>Eukaryota</taxon>
        <taxon>Metazoa</taxon>
        <taxon>Spiralia</taxon>
        <taxon>Lophotrochozoa</taxon>
        <taxon>Mollusca</taxon>
        <taxon>Gastropoda</taxon>
        <taxon>Vetigastropoda</taxon>
        <taxon>Lepetellida</taxon>
        <taxon>Haliotoidea</taxon>
        <taxon>Haliotidae</taxon>
        <taxon>Haliotis</taxon>
    </lineage>
</organism>
<reference key="1">
    <citation type="journal article" date="2001" name="Biochem. Biophys. Res. Commun.">
        <title>Perlustrin, a Haliotis laevigata (abalone) nacre protein, is homologous to the insulin-like growth factor binding protein N-terminal module of vertebrates.</title>
        <authorList>
            <person name="Weiss I.M."/>
            <person name="Goehring W."/>
            <person name="Fritz M."/>
            <person name="Mann K."/>
        </authorList>
    </citation>
    <scope>PROTEIN SEQUENCE</scope>
    <scope>MASS SPECTROMETRY</scope>
    <source>
        <tissue>Shell</tissue>
    </source>
</reference>
<reference key="2">
    <citation type="journal article" date="2000" name="Biochem. Biophys. Res. Commun.">
        <title>Purification and characterization of perlucin and perlustrin, two new proteins from the shell of the mollusc Haliotis laevigata.</title>
        <authorList>
            <person name="Weiss I.M."/>
            <person name="Kaufmann S."/>
            <person name="Mann K."/>
            <person name="Fritz M."/>
        </authorList>
    </citation>
    <scope>PROTEIN SEQUENCE OF 1-33</scope>
    <source>
        <tissue>Shell</tissue>
    </source>
</reference>
<evidence type="ECO:0000255" key="1">
    <source>
        <dbReference type="PROSITE-ProRule" id="PRU00653"/>
    </source>
</evidence>
<evidence type="ECO:0000269" key="2">
    <source>
    </source>
</evidence>
<proteinExistence type="evidence at protein level"/>
<protein>
    <recommendedName>
        <fullName>Perlustrin</fullName>
    </recommendedName>
</protein>
<dbReference type="SMR" id="P82595"/>
<dbReference type="GO" id="GO:0005576">
    <property type="term" value="C:extracellular region"/>
    <property type="evidence" value="ECO:0007669"/>
    <property type="project" value="InterPro"/>
</dbReference>
<dbReference type="GO" id="GO:0019838">
    <property type="term" value="F:growth factor binding"/>
    <property type="evidence" value="ECO:0007669"/>
    <property type="project" value="UniProtKB-KW"/>
</dbReference>
<dbReference type="Gene3D" id="4.10.40.20">
    <property type="match status" value="1"/>
</dbReference>
<dbReference type="InterPro" id="IPR009030">
    <property type="entry name" value="Growth_fac_rcpt_cys_sf"/>
</dbReference>
<dbReference type="InterPro" id="IPR000867">
    <property type="entry name" value="IGFBP-like"/>
</dbReference>
<dbReference type="InterPro" id="IPR017891">
    <property type="entry name" value="Insulin_GF-bd_Cys-rich_CS"/>
</dbReference>
<dbReference type="Pfam" id="PF00219">
    <property type="entry name" value="IGFBP"/>
    <property type="match status" value="1"/>
</dbReference>
<dbReference type="SMART" id="SM00121">
    <property type="entry name" value="IB"/>
    <property type="match status" value="1"/>
</dbReference>
<dbReference type="SUPFAM" id="SSF57184">
    <property type="entry name" value="Growth factor receptor domain"/>
    <property type="match status" value="1"/>
</dbReference>
<dbReference type="PROSITE" id="PS00222">
    <property type="entry name" value="IGFBP_N_1"/>
    <property type="match status" value="1"/>
</dbReference>
<dbReference type="PROSITE" id="PS51323">
    <property type="entry name" value="IGFBP_N_2"/>
    <property type="match status" value="1"/>
</dbReference>
<feature type="chain" id="PRO_0000152777" description="Perlustrin">
    <location>
        <begin position="1"/>
        <end position="84"/>
    </location>
</feature>
<feature type="domain" description="IGFBP N-terminal" evidence="1">
    <location>
        <begin position="1"/>
        <end position="82"/>
    </location>
</feature>
<feature type="disulfide bond" evidence="1">
    <location>
        <begin position="3"/>
        <end position="28"/>
    </location>
</feature>
<feature type="disulfide bond" evidence="1">
    <location>
        <begin position="6"/>
        <end position="30"/>
    </location>
</feature>
<feature type="disulfide bond" evidence="1">
    <location>
        <begin position="11"/>
        <end position="31"/>
    </location>
</feature>
<feature type="disulfide bond" evidence="1">
    <location>
        <begin position="18"/>
        <end position="34"/>
    </location>
</feature>
<feature type="disulfide bond" evidence="1">
    <location>
        <begin position="42"/>
        <end position="55"/>
    </location>
</feature>
<feature type="disulfide bond" evidence="1">
    <location>
        <begin position="49"/>
        <end position="79"/>
    </location>
</feature>